<evidence type="ECO:0000250" key="1">
    <source>
        <dbReference type="UniProtKB" id="P11075"/>
    </source>
</evidence>
<evidence type="ECO:0000255" key="2">
    <source>
        <dbReference type="PROSITE-ProRule" id="PRU00189"/>
    </source>
</evidence>
<evidence type="ECO:0000256" key="3">
    <source>
        <dbReference type="SAM" id="MobiDB-lite"/>
    </source>
</evidence>
<evidence type="ECO:0000269" key="4">
    <source>
    </source>
</evidence>
<evidence type="ECO:0000269" key="5">
    <source>
    </source>
</evidence>
<evidence type="ECO:0000303" key="6">
    <source>
    </source>
</evidence>
<evidence type="ECO:0000305" key="7">
    <source>
    </source>
</evidence>
<dbReference type="EMBL" id="CU329670">
    <property type="protein sequence ID" value="CAB55182.1"/>
    <property type="molecule type" value="Genomic_DNA"/>
</dbReference>
<dbReference type="PIR" id="T38792">
    <property type="entry name" value="T38792"/>
</dbReference>
<dbReference type="PIR" id="T39252">
    <property type="entry name" value="T39252"/>
</dbReference>
<dbReference type="RefSeq" id="NP_594954.1">
    <property type="nucleotide sequence ID" value="NM_001020385.2"/>
</dbReference>
<dbReference type="SMR" id="Q9UT02"/>
<dbReference type="BioGRID" id="280024">
    <property type="interactions" value="3"/>
</dbReference>
<dbReference type="FunCoup" id="Q9UT02">
    <property type="interactions" value="540"/>
</dbReference>
<dbReference type="STRING" id="284812.Q9UT02"/>
<dbReference type="iPTMnet" id="Q9UT02"/>
<dbReference type="PaxDb" id="4896-SPAC4D7.01c.1"/>
<dbReference type="EnsemblFungi" id="SPAC4D7.01c.1">
    <property type="protein sequence ID" value="SPAC4D7.01c.1:pep"/>
    <property type="gene ID" value="SPAC4D7.01c"/>
</dbReference>
<dbReference type="GeneID" id="2543610"/>
<dbReference type="KEGG" id="spo:2543610"/>
<dbReference type="PomBase" id="SPAC4D7.01c">
    <property type="gene designation" value="sec71"/>
</dbReference>
<dbReference type="VEuPathDB" id="FungiDB:SPAC4D7.01c"/>
<dbReference type="eggNOG" id="KOG0929">
    <property type="taxonomic scope" value="Eukaryota"/>
</dbReference>
<dbReference type="HOGENOM" id="CLU_000691_1_1_1"/>
<dbReference type="InParanoid" id="Q9UT02"/>
<dbReference type="OMA" id="MMDNLFL"/>
<dbReference type="PhylomeDB" id="Q9UT02"/>
<dbReference type="Reactome" id="R-SPO-6811438">
    <property type="pathway name" value="Intra-Golgi traffic"/>
</dbReference>
<dbReference type="PRO" id="PR:Q9UT02"/>
<dbReference type="Proteomes" id="UP000002485">
    <property type="component" value="Chromosome I"/>
</dbReference>
<dbReference type="GO" id="GO:0030663">
    <property type="term" value="C:COPI-coated vesicle membrane"/>
    <property type="evidence" value="ECO:0007669"/>
    <property type="project" value="UniProtKB-SubCell"/>
</dbReference>
<dbReference type="GO" id="GO:0012507">
    <property type="term" value="C:ER to Golgi transport vesicle membrane"/>
    <property type="evidence" value="ECO:0007669"/>
    <property type="project" value="UniProtKB-SubCell"/>
</dbReference>
<dbReference type="GO" id="GO:0005794">
    <property type="term" value="C:Golgi apparatus"/>
    <property type="evidence" value="ECO:0007005"/>
    <property type="project" value="PomBase"/>
</dbReference>
<dbReference type="GO" id="GO:0005085">
    <property type="term" value="F:guanyl-nucleotide exchange factor activity"/>
    <property type="evidence" value="ECO:0000266"/>
    <property type="project" value="PomBase"/>
</dbReference>
<dbReference type="GO" id="GO:0046872">
    <property type="term" value="F:metal ion binding"/>
    <property type="evidence" value="ECO:0007669"/>
    <property type="project" value="UniProtKB-KW"/>
</dbReference>
<dbReference type="GO" id="GO:0006888">
    <property type="term" value="P:endoplasmic reticulum to Golgi vesicle-mediated transport"/>
    <property type="evidence" value="ECO:0000266"/>
    <property type="project" value="PomBase"/>
</dbReference>
<dbReference type="GO" id="GO:0006886">
    <property type="term" value="P:intracellular protein transport"/>
    <property type="evidence" value="ECO:0000266"/>
    <property type="project" value="PomBase"/>
</dbReference>
<dbReference type="GO" id="GO:0032012">
    <property type="term" value="P:regulation of ARF protein signal transduction"/>
    <property type="evidence" value="ECO:0007669"/>
    <property type="project" value="InterPro"/>
</dbReference>
<dbReference type="CDD" id="cd00171">
    <property type="entry name" value="Sec7"/>
    <property type="match status" value="1"/>
</dbReference>
<dbReference type="FunFam" id="1.10.1000.11:FF:000003">
    <property type="entry name" value="Brefeldin A-inhibited guanine nucleotide-exchange protein 1"/>
    <property type="match status" value="1"/>
</dbReference>
<dbReference type="FunFam" id="1.10.220.20:FF:000002">
    <property type="entry name" value="Brefeldin A-inhibited guanine nucleotide-exchange protein 1"/>
    <property type="match status" value="1"/>
</dbReference>
<dbReference type="Gene3D" id="1.10.220.20">
    <property type="match status" value="1"/>
</dbReference>
<dbReference type="Gene3D" id="1.10.1000.11">
    <property type="entry name" value="Arf Nucleotide-binding Site Opener,domain 2"/>
    <property type="match status" value="1"/>
</dbReference>
<dbReference type="InterPro" id="IPR016024">
    <property type="entry name" value="ARM-type_fold"/>
</dbReference>
<dbReference type="InterPro" id="IPR032629">
    <property type="entry name" value="DCB_dom"/>
</dbReference>
<dbReference type="InterPro" id="IPR015403">
    <property type="entry name" value="Mon2/Sec7/BIG1-like_HDS"/>
</dbReference>
<dbReference type="InterPro" id="IPR032691">
    <property type="entry name" value="Mon2/Sec7/BIG1-like_HUS"/>
</dbReference>
<dbReference type="InterPro" id="IPR046455">
    <property type="entry name" value="Sec7/BIG1-like_C"/>
</dbReference>
<dbReference type="InterPro" id="IPR023394">
    <property type="entry name" value="Sec7_C_sf"/>
</dbReference>
<dbReference type="InterPro" id="IPR000904">
    <property type="entry name" value="Sec7_dom"/>
</dbReference>
<dbReference type="InterPro" id="IPR035999">
    <property type="entry name" value="Sec7_dom_sf"/>
</dbReference>
<dbReference type="PANTHER" id="PTHR10663">
    <property type="entry name" value="GUANYL-NUCLEOTIDE EXCHANGE FACTOR"/>
    <property type="match status" value="1"/>
</dbReference>
<dbReference type="PANTHER" id="PTHR10663:SF396">
    <property type="entry name" value="PROTEIN TRANSPORT PROTEIN SEC71"/>
    <property type="match status" value="1"/>
</dbReference>
<dbReference type="Pfam" id="PF20252">
    <property type="entry name" value="BIG2_C"/>
    <property type="match status" value="1"/>
</dbReference>
<dbReference type="Pfam" id="PF16213">
    <property type="entry name" value="DCB"/>
    <property type="match status" value="1"/>
</dbReference>
<dbReference type="Pfam" id="PF01369">
    <property type="entry name" value="Sec7"/>
    <property type="match status" value="1"/>
</dbReference>
<dbReference type="Pfam" id="PF09324">
    <property type="entry name" value="Sec7-like_HDS"/>
    <property type="match status" value="1"/>
</dbReference>
<dbReference type="Pfam" id="PF12783">
    <property type="entry name" value="Sec7-like_HUS"/>
    <property type="match status" value="1"/>
</dbReference>
<dbReference type="SMART" id="SM00222">
    <property type="entry name" value="Sec7"/>
    <property type="match status" value="1"/>
</dbReference>
<dbReference type="SUPFAM" id="SSF48371">
    <property type="entry name" value="ARM repeat"/>
    <property type="match status" value="1"/>
</dbReference>
<dbReference type="SUPFAM" id="SSF48425">
    <property type="entry name" value="Sec7 domain"/>
    <property type="match status" value="1"/>
</dbReference>
<dbReference type="PROSITE" id="PS50190">
    <property type="entry name" value="SEC7"/>
    <property type="match status" value="1"/>
</dbReference>
<feature type="chain" id="PRO_0000120215" description="ADP-ribosylation factor guanine nucleotide-exchange factor sec71">
    <location>
        <begin position="1"/>
        <end position="1811"/>
    </location>
</feature>
<feature type="domain" description="SEC7" evidence="2">
    <location>
        <begin position="692"/>
        <end position="880"/>
    </location>
</feature>
<feature type="region of interest" description="Disordered" evidence="3">
    <location>
        <begin position="1"/>
        <end position="108"/>
    </location>
</feature>
<feature type="region of interest" description="Disordered" evidence="3">
    <location>
        <begin position="316"/>
        <end position="336"/>
    </location>
</feature>
<feature type="region of interest" description="Disordered" evidence="3">
    <location>
        <begin position="643"/>
        <end position="688"/>
    </location>
</feature>
<feature type="region of interest" description="HDS1 domain" evidence="1">
    <location>
        <begin position="889"/>
        <end position="1103"/>
    </location>
</feature>
<feature type="short sequence motif" description="HUS box" evidence="1">
    <location>
        <begin position="533"/>
        <end position="537"/>
    </location>
</feature>
<feature type="compositionally biased region" description="Basic and acidic residues" evidence="3">
    <location>
        <begin position="33"/>
        <end position="49"/>
    </location>
</feature>
<feature type="compositionally biased region" description="Basic and acidic residues" evidence="3">
    <location>
        <begin position="57"/>
        <end position="73"/>
    </location>
</feature>
<feature type="compositionally biased region" description="Basic and acidic residues" evidence="3">
    <location>
        <begin position="80"/>
        <end position="91"/>
    </location>
</feature>
<feature type="compositionally biased region" description="Polar residues" evidence="3">
    <location>
        <begin position="92"/>
        <end position="108"/>
    </location>
</feature>
<feature type="compositionally biased region" description="Polar residues" evidence="3">
    <location>
        <begin position="316"/>
        <end position="326"/>
    </location>
</feature>
<feature type="compositionally biased region" description="Basic and acidic residues" evidence="3">
    <location>
        <begin position="643"/>
        <end position="663"/>
    </location>
</feature>
<feature type="compositionally biased region" description="Polar residues" evidence="3">
    <location>
        <begin position="669"/>
        <end position="688"/>
    </location>
</feature>
<feature type="binding site" evidence="1">
    <location>
        <position position="812"/>
    </location>
    <ligand>
        <name>Mg(2+)</name>
        <dbReference type="ChEBI" id="CHEBI:18420"/>
    </ligand>
</feature>
<feature type="modified residue" description="Phosphoserine" evidence="4">
    <location>
        <position position="40"/>
    </location>
</feature>
<feature type="modified residue" description="Phosphothreonine" evidence="4">
    <location>
        <position position="326"/>
    </location>
</feature>
<feature type="modified residue" description="Phosphoserine" evidence="4">
    <location>
        <position position="332"/>
    </location>
</feature>
<feature type="modified residue" description="Phosphoserine" evidence="4">
    <location>
        <position position="353"/>
    </location>
</feature>
<feature type="modified residue" description="Phosphoserine" evidence="4">
    <location>
        <position position="741"/>
    </location>
</feature>
<feature type="modified residue" description="Phosphothreonine" evidence="4">
    <location>
        <position position="742"/>
    </location>
</feature>
<sequence length="1811" mass="206932">MTDLEIETVSRVSSNPDEVKGSSVVEEEPDSESTIKSRVSDEIDEHDSIPEQSNTEKSIEINDKNLEAEKDIESNLSLRPPEDDLDSRSIESEQTGTLSKQTTSTSEAPQDLKIWKNISNASNQNSGKLNPQLFVIEAFKHMSKAKATKRHKKLREAINNVQIELQKQPFLLPEVILEPLVMACQTNSTTLLTITLDCFAKLIDYNYFDSPTLNPSDITLMERVVNTIASCFCGESTPERVQLQIVKALLAAITSERTIIRHSFLLTAVRQTYNIFLLCKDSTTQAIAQVALLQMVDSVFQRLSTVLNHEREFSTINMNKSSSNGTPDRANSPIPSQLSENKLTLESFEHRKSFDQVREEAPLEEDSLEQQLLRDAFLLIRALCKLSIKNIPYEHEYDLKSQSMRSKLMSLHLIYHILRTYMNILSDINVKIRSPTSTPTPLIDAVKQYICLALAKNVVSHVLPVFEISCEIFWLILSELKNFFKSELEVFFTEIFFPILEMRTSSNQQKIVLLNIFHRMCEEPQTLIELYLNYDCISGNTENIYERAIVTLSRIASQSTSDPPPSFVFRDDQLVIDKPGFVYHTLNDIPQLNSSTIGSYVHSHNPPYFDYQIRLKSYRCLISTLSSLFTWCNQTFAPTVEITAKDDETESTSKGEEPQKSKSEPPSAGINSTSMDNLESSGQALATDDPSQFENLKHRKKQLQEAIQKFNYKPKEGIKILLSSHFIASKTPTDIAKFLISTEGLDKAVLGEYLGEGNDENIAIMHSFVDHMSFNDIPFVNALRSFLQKFRLPGEAQKIDRFMLKFAEKYIDDNLGVFKNADTAYILAYSIIMLNTDLHSPQVKNRMTCQDFIKNNRGVDDGANLSDSFLTEVYEEIQKNEIVLKDEQDPTSNFPEIPGTSNLSFAANISNALATVGRDLQREAYYMASNKMANKTEALFKDLIREQRERGKLSGNDIYYTARHFEHVCPMFEAVWMPILAAFSEPLQLSSDPALIQLSLDGFRLAMNVIFFFSMDLPRNAFMQTLTKFTHLNNTSELKWTNMHALKTLLEISLAHGDKLRDSWKDVLLCISQLERVQLISAGVDINSLPDVSTTKPLRKSLDKNIRQSRSGSISLKHSKSFQSASTHSTKSSSVEIVREYSSREVVMAVDMLFSNTRNLGSEGIYDFVKALIEVSWEEIECSLELSNPRLFSLQKLVEISYYNMRRIRMEWSSIWSLLGTYFTQVSCHENSIIASFALDSLRQFSMQFLEIEELSHFKFQKDFLQPFSHAMENSQDLKIKDLVLRCIDQMIKARYQNIRSGWRTIFHILAYASKIENLLVLQCAISVVSSLGHEHISCVLTQGAYIDLISCITKFAKLNGNQKFCLSCVDMLKNLEHELIKHLKHMKKESVYSKKLEEEYWLPFLLSFNEIICEASDLEVRSKALKVLFDCLYRHADDFDEEFWETVSNKALLSIFSILSITNSQRLYLAKNTEETEVWMLTTMVEALKAFIELIKNLFERLHFLLPKALNLLEKCICQENSMISKVGLSCFSQFVLKNKNQFKDVDWDEIINSINQLLQMTLPIELRDPSLYPQVNSDSSLEDVKENSFRPHEISRFNSQSVFKSKKHHLKSIVVKCTLQLLMLNCLWELFHSDNMLTNIPKRKMVKLLDILKQSWEFAESFNSDFEIRAKILSSGIVEHMPNLLSQEALCAKLYFYTAFECMSSLKSDSHDTEEYNDLMDVFQKKIYLASQLVLHGFQRVIGDNPVKGVAAFQPVIAALVSYINSLDEIQFSRGKSEFYQLLCAIVACGHIDQQLGTSLSNAFLRYAC</sequence>
<gene>
    <name evidence="6" type="primary">sec71</name>
    <name type="synonym">sec7a</name>
    <name type="ORF">SPAC4D7.01c</name>
    <name type="ORF">SPAP8A3.15c</name>
</gene>
<organism>
    <name type="scientific">Schizosaccharomyces pombe (strain 972 / ATCC 24843)</name>
    <name type="common">Fission yeast</name>
    <dbReference type="NCBI Taxonomy" id="284812"/>
    <lineage>
        <taxon>Eukaryota</taxon>
        <taxon>Fungi</taxon>
        <taxon>Dikarya</taxon>
        <taxon>Ascomycota</taxon>
        <taxon>Taphrinomycotina</taxon>
        <taxon>Schizosaccharomycetes</taxon>
        <taxon>Schizosaccharomycetales</taxon>
        <taxon>Schizosaccharomycetaceae</taxon>
        <taxon>Schizosaccharomyces</taxon>
    </lineage>
</organism>
<reference key="1">
    <citation type="journal article" date="2002" name="Nature">
        <title>The genome sequence of Schizosaccharomyces pombe.</title>
        <authorList>
            <person name="Wood V."/>
            <person name="Gwilliam R."/>
            <person name="Rajandream M.A."/>
            <person name="Lyne M.H."/>
            <person name="Lyne R."/>
            <person name="Stewart A."/>
            <person name="Sgouros J.G."/>
            <person name="Peat N."/>
            <person name="Hayles J."/>
            <person name="Baker S.G."/>
            <person name="Basham D."/>
            <person name="Bowman S."/>
            <person name="Brooks K."/>
            <person name="Brown D."/>
            <person name="Brown S."/>
            <person name="Chillingworth T."/>
            <person name="Churcher C.M."/>
            <person name="Collins M."/>
            <person name="Connor R."/>
            <person name="Cronin A."/>
            <person name="Davis P."/>
            <person name="Feltwell T."/>
            <person name="Fraser A."/>
            <person name="Gentles S."/>
            <person name="Goble A."/>
            <person name="Hamlin N."/>
            <person name="Harris D.E."/>
            <person name="Hidalgo J."/>
            <person name="Hodgson G."/>
            <person name="Holroyd S."/>
            <person name="Hornsby T."/>
            <person name="Howarth S."/>
            <person name="Huckle E.J."/>
            <person name="Hunt S."/>
            <person name="Jagels K."/>
            <person name="James K.D."/>
            <person name="Jones L."/>
            <person name="Jones M."/>
            <person name="Leather S."/>
            <person name="McDonald S."/>
            <person name="McLean J."/>
            <person name="Mooney P."/>
            <person name="Moule S."/>
            <person name="Mungall K.L."/>
            <person name="Murphy L.D."/>
            <person name="Niblett D."/>
            <person name="Odell C."/>
            <person name="Oliver K."/>
            <person name="O'Neil S."/>
            <person name="Pearson D."/>
            <person name="Quail M.A."/>
            <person name="Rabbinowitsch E."/>
            <person name="Rutherford K.M."/>
            <person name="Rutter S."/>
            <person name="Saunders D."/>
            <person name="Seeger K."/>
            <person name="Sharp S."/>
            <person name="Skelton J."/>
            <person name="Simmonds M.N."/>
            <person name="Squares R."/>
            <person name="Squares S."/>
            <person name="Stevens K."/>
            <person name="Taylor K."/>
            <person name="Taylor R.G."/>
            <person name="Tivey A."/>
            <person name="Walsh S.V."/>
            <person name="Warren T."/>
            <person name="Whitehead S."/>
            <person name="Woodward J.R."/>
            <person name="Volckaert G."/>
            <person name="Aert R."/>
            <person name="Robben J."/>
            <person name="Grymonprez B."/>
            <person name="Weltjens I."/>
            <person name="Vanstreels E."/>
            <person name="Rieger M."/>
            <person name="Schaefer M."/>
            <person name="Mueller-Auer S."/>
            <person name="Gabel C."/>
            <person name="Fuchs M."/>
            <person name="Duesterhoeft A."/>
            <person name="Fritzc C."/>
            <person name="Holzer E."/>
            <person name="Moestl D."/>
            <person name="Hilbert H."/>
            <person name="Borzym K."/>
            <person name="Langer I."/>
            <person name="Beck A."/>
            <person name="Lehrach H."/>
            <person name="Reinhardt R."/>
            <person name="Pohl T.M."/>
            <person name="Eger P."/>
            <person name="Zimmermann W."/>
            <person name="Wedler H."/>
            <person name="Wambutt R."/>
            <person name="Purnelle B."/>
            <person name="Goffeau A."/>
            <person name="Cadieu E."/>
            <person name="Dreano S."/>
            <person name="Gloux S."/>
            <person name="Lelaure V."/>
            <person name="Mottier S."/>
            <person name="Galibert F."/>
            <person name="Aves S.J."/>
            <person name="Xiang Z."/>
            <person name="Hunt C."/>
            <person name="Moore K."/>
            <person name="Hurst S.M."/>
            <person name="Lucas M."/>
            <person name="Rochet M."/>
            <person name="Gaillardin C."/>
            <person name="Tallada V.A."/>
            <person name="Garzon A."/>
            <person name="Thode G."/>
            <person name="Daga R.R."/>
            <person name="Cruzado L."/>
            <person name="Jimenez J."/>
            <person name="Sanchez M."/>
            <person name="del Rey F."/>
            <person name="Benito J."/>
            <person name="Dominguez A."/>
            <person name="Revuelta J.L."/>
            <person name="Moreno S."/>
            <person name="Armstrong J."/>
            <person name="Forsburg S.L."/>
            <person name="Cerutti L."/>
            <person name="Lowe T."/>
            <person name="McCombie W.R."/>
            <person name="Paulsen I."/>
            <person name="Potashkin J."/>
            <person name="Shpakovski G.V."/>
            <person name="Ussery D."/>
            <person name="Barrell B.G."/>
            <person name="Nurse P."/>
        </authorList>
    </citation>
    <scope>NUCLEOTIDE SEQUENCE [LARGE SCALE GENOMIC DNA]</scope>
    <source>
        <strain>972 / ATCC 24843</strain>
    </source>
</reference>
<reference key="2">
    <citation type="journal article" date="2008" name="J. Proteome Res.">
        <title>Phosphoproteome analysis of fission yeast.</title>
        <authorList>
            <person name="Wilson-Grady J.T."/>
            <person name="Villen J."/>
            <person name="Gygi S.P."/>
        </authorList>
    </citation>
    <scope>PHOSPHORYLATION [LARGE SCALE ANALYSIS] AT SER-40; THR-326; SER-332; SER-353; SER-741 AND THR-742</scope>
    <scope>IDENTIFICATION BY MASS SPECTROMETRY</scope>
</reference>
<reference key="3">
    <citation type="journal article" date="2013" name="PLoS ONE">
        <title>Haploinsufficiency of the Sec7 guanine nucleotide exchange factor gea1 impairs septation in fission yeast.</title>
        <authorList>
            <person name="Eckler A.M."/>
            <person name="Wilder C."/>
            <person name="Castanon A."/>
            <person name="Ferris V.M."/>
            <person name="Lamere R.A."/>
            <person name="Perrin B.A."/>
            <person name="Pearlman R."/>
            <person name="White B."/>
            <person name="Byrd C."/>
            <person name="Ludvik N."/>
            <person name="Nichols N."/>
            <person name="Poole-Sumrall K."/>
            <person name="Sztul E."/>
            <person name="Styers M.L."/>
        </authorList>
    </citation>
    <scope>FUNCTION</scope>
</reference>
<reference key="4">
    <citation type="journal article" date="2022" name="Mol. Biol. Rep.">
        <title>Involvement of Sec71 and Ubp2 in tunicamycin-induced ER stress response in the fission yeast.</title>
        <authorList>
            <person name="Yemenici M."/>
            <person name="Kartal Sural B."/>
            <person name="Karaer Uzuner S."/>
            <person name="Palabiyik B."/>
        </authorList>
    </citation>
    <scope>FUNCTION</scope>
    <scope>DISRUPTION PHENOTYPE</scope>
</reference>
<name>SEC71_SCHPO</name>
<comment type="function">
    <text evidence="5 7">Guanine exchange factor that acts as an activator of arf1 at the trans-Golgi net-work and is thus involved in vesicular budding and traffic between compartments of the Golgi apparatus (Probable). Activation of Arf (ADP-ribosylation factor) GTPases is essential for vesicle formation via recruitment of cargo adapters and coat proteins necessary for Golgi trafficking (Probable). Involved in tunicamycin-induced ER stress response and subsequent apoptosis (PubMed:35474054).</text>
</comment>
<comment type="subcellular location">
    <subcellularLocation>
        <location evidence="1">Cytoplasm</location>
    </subcellularLocation>
    <subcellularLocation>
        <location evidence="1">Golgi apparatus</location>
    </subcellularLocation>
    <subcellularLocation>
        <location evidence="1">Golgi apparatus</location>
        <location evidence="1">trans-Golgi network</location>
    </subcellularLocation>
    <subcellularLocation>
        <location evidence="1">Cytoplasmic vesicle</location>
        <location evidence="1">COPI-coated vesicle membrane</location>
    </subcellularLocation>
    <subcellularLocation>
        <location evidence="1">Cytoplasmic vesicle</location>
        <location evidence="1">COPII-coated vesicle membrane</location>
    </subcellularLocation>
</comment>
<comment type="domain">
    <text evidence="1">The homology upstream of Sec7 (HUS) box is necessary for the allosteric activation of Ssec71.</text>
</comment>
<comment type="domain">
    <text evidence="1">The homology downstream of Sec7 (HDS) domain 1 is required for recruitment to the trans-Golgi network via its interaction with activated arf11.</text>
</comment>
<comment type="disruption phenotype">
    <text evidence="5">Causes high production of ROS, significantly decreases proteasomal activity and sensitizes cells to tunicamycin-induced ER stress, resulting in increased apoptosis.</text>
</comment>
<accession>Q9UT02</accession>
<accession>O14168</accession>
<proteinExistence type="evidence at protein level"/>
<protein>
    <recommendedName>
        <fullName evidence="6">ADP-ribosylation factor guanine nucleotide-exchange factor sec71</fullName>
        <shortName evidence="6">ARF-GEP sec71</shortName>
    </recommendedName>
</protein>
<keyword id="KW-0963">Cytoplasm</keyword>
<keyword id="KW-0968">Cytoplasmic vesicle</keyword>
<keyword id="KW-0333">Golgi apparatus</keyword>
<keyword id="KW-0460">Magnesium</keyword>
<keyword id="KW-0472">Membrane</keyword>
<keyword id="KW-0479">Metal-binding</keyword>
<keyword id="KW-0597">Phosphoprotein</keyword>
<keyword id="KW-0653">Protein transport</keyword>
<keyword id="KW-1185">Reference proteome</keyword>
<keyword id="KW-0813">Transport</keyword>